<accession>Q11Z03</accession>
<sequence length="337" mass="36795">MASSNFIDYVKVCCRSGKGGAGAVHFRKEKHTPLGGPDGGNGGRGGHIILRGNVQLWTLLHLKYTKHIMAEDGERGGTNRASGAQGKDQIVEVPLGTIARDPETGEKIAEITEDGQEIILIPAGRGGLGNEQFKTSTNQAPHYAQPGEPGIEAWVILELKVLADVGLVGFPNAGKSTLLSKVSAAKPEIADYAFTTLAPNLGVVKYRDYRSFIMADIPGIIEGAAEGKGLGIRFLRHIERNSILLFLIAADSKDIRAEYEILLNELQKYNPELLHKDRILAISKSDMLDDELKAELKKELPKGVETVFFSSYLNQGLTELKDLLWTTMNKPKSDFME</sequence>
<reference key="1">
    <citation type="journal article" date="2007" name="Appl. Environ. Microbiol.">
        <title>Genome sequence of the cellulolytic gliding bacterium Cytophaga hutchinsonii.</title>
        <authorList>
            <person name="Xie G."/>
            <person name="Bruce D.C."/>
            <person name="Challacombe J.F."/>
            <person name="Chertkov O."/>
            <person name="Detter J.C."/>
            <person name="Gilna P."/>
            <person name="Han C.S."/>
            <person name="Lucas S."/>
            <person name="Misra M."/>
            <person name="Myers G.L."/>
            <person name="Richardson P."/>
            <person name="Tapia R."/>
            <person name="Thayer N."/>
            <person name="Thompson L.S."/>
            <person name="Brettin T.S."/>
            <person name="Henrissat B."/>
            <person name="Wilson D.B."/>
            <person name="McBride M.J."/>
        </authorList>
    </citation>
    <scope>NUCLEOTIDE SEQUENCE [LARGE SCALE GENOMIC DNA]</scope>
    <source>
        <strain>ATCC 33406 / DSM 1761 / JCM 20678 / CIP 103989 / IAM 12607 / NBRC 15051 / NCIMB 9469 / D465</strain>
    </source>
</reference>
<evidence type="ECO:0000255" key="1">
    <source>
        <dbReference type="HAMAP-Rule" id="MF_01454"/>
    </source>
</evidence>
<evidence type="ECO:0000255" key="2">
    <source>
        <dbReference type="PROSITE-ProRule" id="PRU01231"/>
    </source>
</evidence>
<feature type="chain" id="PRO_0000385873" description="GTPase Obg">
    <location>
        <begin position="1"/>
        <end position="337"/>
    </location>
</feature>
<feature type="domain" description="Obg" evidence="2">
    <location>
        <begin position="4"/>
        <end position="162"/>
    </location>
</feature>
<feature type="domain" description="OBG-type G" evidence="1">
    <location>
        <begin position="163"/>
        <end position="329"/>
    </location>
</feature>
<feature type="binding site" evidence="1">
    <location>
        <begin position="169"/>
        <end position="176"/>
    </location>
    <ligand>
        <name>GTP</name>
        <dbReference type="ChEBI" id="CHEBI:37565"/>
    </ligand>
</feature>
<feature type="binding site" evidence="1">
    <location>
        <position position="176"/>
    </location>
    <ligand>
        <name>Mg(2+)</name>
        <dbReference type="ChEBI" id="CHEBI:18420"/>
    </ligand>
</feature>
<feature type="binding site" evidence="1">
    <location>
        <begin position="194"/>
        <end position="198"/>
    </location>
    <ligand>
        <name>GTP</name>
        <dbReference type="ChEBI" id="CHEBI:37565"/>
    </ligand>
</feature>
<feature type="binding site" evidence="1">
    <location>
        <position position="196"/>
    </location>
    <ligand>
        <name>Mg(2+)</name>
        <dbReference type="ChEBI" id="CHEBI:18420"/>
    </ligand>
</feature>
<feature type="binding site" evidence="1">
    <location>
        <begin position="216"/>
        <end position="219"/>
    </location>
    <ligand>
        <name>GTP</name>
        <dbReference type="ChEBI" id="CHEBI:37565"/>
    </ligand>
</feature>
<feature type="binding site" evidence="1">
    <location>
        <begin position="283"/>
        <end position="286"/>
    </location>
    <ligand>
        <name>GTP</name>
        <dbReference type="ChEBI" id="CHEBI:37565"/>
    </ligand>
</feature>
<feature type="binding site" evidence="1">
    <location>
        <begin position="310"/>
        <end position="312"/>
    </location>
    <ligand>
        <name>GTP</name>
        <dbReference type="ChEBI" id="CHEBI:37565"/>
    </ligand>
</feature>
<dbReference type="EC" id="3.6.5.-" evidence="1"/>
<dbReference type="EMBL" id="CP000383">
    <property type="protein sequence ID" value="ABG57363.1"/>
    <property type="molecule type" value="Genomic_DNA"/>
</dbReference>
<dbReference type="RefSeq" id="WP_011583479.1">
    <property type="nucleotide sequence ID" value="NC_008255.1"/>
</dbReference>
<dbReference type="SMR" id="Q11Z03"/>
<dbReference type="STRING" id="269798.CHU_0069"/>
<dbReference type="KEGG" id="chu:CHU_0069"/>
<dbReference type="eggNOG" id="COG0536">
    <property type="taxonomic scope" value="Bacteria"/>
</dbReference>
<dbReference type="HOGENOM" id="CLU_011747_2_0_10"/>
<dbReference type="OrthoDB" id="9807318at2"/>
<dbReference type="Proteomes" id="UP000001822">
    <property type="component" value="Chromosome"/>
</dbReference>
<dbReference type="GO" id="GO:0005737">
    <property type="term" value="C:cytoplasm"/>
    <property type="evidence" value="ECO:0007669"/>
    <property type="project" value="UniProtKB-SubCell"/>
</dbReference>
<dbReference type="GO" id="GO:0005525">
    <property type="term" value="F:GTP binding"/>
    <property type="evidence" value="ECO:0007669"/>
    <property type="project" value="UniProtKB-UniRule"/>
</dbReference>
<dbReference type="GO" id="GO:0003924">
    <property type="term" value="F:GTPase activity"/>
    <property type="evidence" value="ECO:0007669"/>
    <property type="project" value="UniProtKB-UniRule"/>
</dbReference>
<dbReference type="GO" id="GO:0000287">
    <property type="term" value="F:magnesium ion binding"/>
    <property type="evidence" value="ECO:0007669"/>
    <property type="project" value="InterPro"/>
</dbReference>
<dbReference type="GO" id="GO:0042254">
    <property type="term" value="P:ribosome biogenesis"/>
    <property type="evidence" value="ECO:0007669"/>
    <property type="project" value="UniProtKB-UniRule"/>
</dbReference>
<dbReference type="CDD" id="cd01898">
    <property type="entry name" value="Obg"/>
    <property type="match status" value="1"/>
</dbReference>
<dbReference type="FunFam" id="2.70.210.12:FF:000001">
    <property type="entry name" value="GTPase Obg"/>
    <property type="match status" value="1"/>
</dbReference>
<dbReference type="Gene3D" id="2.70.210.12">
    <property type="entry name" value="GTP1/OBG domain"/>
    <property type="match status" value="1"/>
</dbReference>
<dbReference type="Gene3D" id="3.40.50.300">
    <property type="entry name" value="P-loop containing nucleotide triphosphate hydrolases"/>
    <property type="match status" value="1"/>
</dbReference>
<dbReference type="HAMAP" id="MF_01454">
    <property type="entry name" value="GTPase_Obg"/>
    <property type="match status" value="1"/>
</dbReference>
<dbReference type="InterPro" id="IPR031167">
    <property type="entry name" value="G_OBG"/>
</dbReference>
<dbReference type="InterPro" id="IPR006073">
    <property type="entry name" value="GTP-bd"/>
</dbReference>
<dbReference type="InterPro" id="IPR014100">
    <property type="entry name" value="GTP-bd_Obg/CgtA"/>
</dbReference>
<dbReference type="InterPro" id="IPR006074">
    <property type="entry name" value="GTP1-OBG_CS"/>
</dbReference>
<dbReference type="InterPro" id="IPR006169">
    <property type="entry name" value="GTP1_OBG_dom"/>
</dbReference>
<dbReference type="InterPro" id="IPR036726">
    <property type="entry name" value="GTP1_OBG_dom_sf"/>
</dbReference>
<dbReference type="InterPro" id="IPR045086">
    <property type="entry name" value="OBG_GTPase"/>
</dbReference>
<dbReference type="InterPro" id="IPR027417">
    <property type="entry name" value="P-loop_NTPase"/>
</dbReference>
<dbReference type="NCBIfam" id="TIGR02729">
    <property type="entry name" value="Obg_CgtA"/>
    <property type="match status" value="1"/>
</dbReference>
<dbReference type="NCBIfam" id="NF008955">
    <property type="entry name" value="PRK12297.1"/>
    <property type="match status" value="1"/>
</dbReference>
<dbReference type="NCBIfam" id="NF008956">
    <property type="entry name" value="PRK12299.1"/>
    <property type="match status" value="1"/>
</dbReference>
<dbReference type="PANTHER" id="PTHR11702">
    <property type="entry name" value="DEVELOPMENTALLY REGULATED GTP-BINDING PROTEIN-RELATED"/>
    <property type="match status" value="1"/>
</dbReference>
<dbReference type="PANTHER" id="PTHR11702:SF31">
    <property type="entry name" value="MITOCHONDRIAL RIBOSOME-ASSOCIATED GTPASE 2"/>
    <property type="match status" value="1"/>
</dbReference>
<dbReference type="Pfam" id="PF01018">
    <property type="entry name" value="GTP1_OBG"/>
    <property type="match status" value="1"/>
</dbReference>
<dbReference type="Pfam" id="PF01926">
    <property type="entry name" value="MMR_HSR1"/>
    <property type="match status" value="1"/>
</dbReference>
<dbReference type="PIRSF" id="PIRSF002401">
    <property type="entry name" value="GTP_bd_Obg/CgtA"/>
    <property type="match status" value="1"/>
</dbReference>
<dbReference type="PRINTS" id="PR00326">
    <property type="entry name" value="GTP1OBG"/>
</dbReference>
<dbReference type="SUPFAM" id="SSF82051">
    <property type="entry name" value="Obg GTP-binding protein N-terminal domain"/>
    <property type="match status" value="1"/>
</dbReference>
<dbReference type="SUPFAM" id="SSF52540">
    <property type="entry name" value="P-loop containing nucleoside triphosphate hydrolases"/>
    <property type="match status" value="1"/>
</dbReference>
<dbReference type="PROSITE" id="PS51710">
    <property type="entry name" value="G_OBG"/>
    <property type="match status" value="1"/>
</dbReference>
<dbReference type="PROSITE" id="PS00905">
    <property type="entry name" value="GTP1_OBG"/>
    <property type="match status" value="1"/>
</dbReference>
<dbReference type="PROSITE" id="PS51883">
    <property type="entry name" value="OBG"/>
    <property type="match status" value="1"/>
</dbReference>
<keyword id="KW-0963">Cytoplasm</keyword>
<keyword id="KW-0342">GTP-binding</keyword>
<keyword id="KW-0378">Hydrolase</keyword>
<keyword id="KW-0460">Magnesium</keyword>
<keyword id="KW-0479">Metal-binding</keyword>
<keyword id="KW-0547">Nucleotide-binding</keyword>
<keyword id="KW-1185">Reference proteome</keyword>
<organism>
    <name type="scientific">Cytophaga hutchinsonii (strain ATCC 33406 / DSM 1761 / CIP 103989 / NBRC 15051 / NCIMB 9469 / D465)</name>
    <dbReference type="NCBI Taxonomy" id="269798"/>
    <lineage>
        <taxon>Bacteria</taxon>
        <taxon>Pseudomonadati</taxon>
        <taxon>Bacteroidota</taxon>
        <taxon>Cytophagia</taxon>
        <taxon>Cytophagales</taxon>
        <taxon>Cytophagaceae</taxon>
        <taxon>Cytophaga</taxon>
    </lineage>
</organism>
<proteinExistence type="inferred from homology"/>
<protein>
    <recommendedName>
        <fullName evidence="1">GTPase Obg</fullName>
        <ecNumber evidence="1">3.6.5.-</ecNumber>
    </recommendedName>
    <alternativeName>
        <fullName evidence="1">GTP-binding protein Obg</fullName>
    </alternativeName>
</protein>
<gene>
    <name evidence="1" type="primary">obg</name>
    <name type="ordered locus">CHU_0069</name>
</gene>
<name>OBG_CYTH3</name>
<comment type="function">
    <text evidence="1">An essential GTPase which binds GTP, GDP and possibly (p)ppGpp with moderate affinity, with high nucleotide exchange rates and a fairly low GTP hydrolysis rate. Plays a role in control of the cell cycle, stress response, ribosome biogenesis and in those bacteria that undergo differentiation, in morphogenesis control.</text>
</comment>
<comment type="cofactor">
    <cofactor evidence="1">
        <name>Mg(2+)</name>
        <dbReference type="ChEBI" id="CHEBI:18420"/>
    </cofactor>
</comment>
<comment type="subunit">
    <text evidence="1">Monomer.</text>
</comment>
<comment type="subcellular location">
    <subcellularLocation>
        <location evidence="1">Cytoplasm</location>
    </subcellularLocation>
</comment>
<comment type="similarity">
    <text evidence="1">Belongs to the TRAFAC class OBG-HflX-like GTPase superfamily. OBG GTPase family.</text>
</comment>